<feature type="chain" id="PRO_0000379375" description="ATP-dependent helicase/deoxyribonuclease subunit B">
    <location>
        <begin position="1"/>
        <end position="1200"/>
    </location>
</feature>
<gene>
    <name evidence="1" type="primary">rexB</name>
    <name type="ordered locus">lp_2694</name>
</gene>
<dbReference type="EC" id="3.1.-.-" evidence="1"/>
<dbReference type="EMBL" id="AL935263">
    <property type="protein sequence ID" value="CCC79816.1"/>
    <property type="molecule type" value="Genomic_DNA"/>
</dbReference>
<dbReference type="RefSeq" id="WP_011101883.1">
    <property type="nucleotide sequence ID" value="NC_004567.2"/>
</dbReference>
<dbReference type="RefSeq" id="YP_004890330.1">
    <property type="nucleotide sequence ID" value="NC_004567.2"/>
</dbReference>
<dbReference type="SMR" id="Q88U40"/>
<dbReference type="STRING" id="220668.lp_2694"/>
<dbReference type="EnsemblBacteria" id="CCC79816">
    <property type="protein sequence ID" value="CCC79816"/>
    <property type="gene ID" value="lp_2694"/>
</dbReference>
<dbReference type="KEGG" id="lpl:lp_2694"/>
<dbReference type="PATRIC" id="fig|220668.9.peg.2255"/>
<dbReference type="eggNOG" id="COG3857">
    <property type="taxonomic scope" value="Bacteria"/>
</dbReference>
<dbReference type="HOGENOM" id="CLU_007838_0_0_9"/>
<dbReference type="OrthoDB" id="9758506at2"/>
<dbReference type="PhylomeDB" id="Q88U40"/>
<dbReference type="Proteomes" id="UP000000432">
    <property type="component" value="Chromosome"/>
</dbReference>
<dbReference type="GO" id="GO:0008409">
    <property type="term" value="F:5'-3' exonuclease activity"/>
    <property type="evidence" value="ECO:0007669"/>
    <property type="project" value="UniProtKB-UniRule"/>
</dbReference>
<dbReference type="GO" id="GO:0005524">
    <property type="term" value="F:ATP binding"/>
    <property type="evidence" value="ECO:0007669"/>
    <property type="project" value="UniProtKB-UniRule"/>
</dbReference>
<dbReference type="GO" id="GO:0003690">
    <property type="term" value="F:double-stranded DNA binding"/>
    <property type="evidence" value="ECO:0007669"/>
    <property type="project" value="UniProtKB-UniRule"/>
</dbReference>
<dbReference type="GO" id="GO:0004386">
    <property type="term" value="F:helicase activity"/>
    <property type="evidence" value="ECO:0007669"/>
    <property type="project" value="UniProtKB-KW"/>
</dbReference>
<dbReference type="GO" id="GO:0016817">
    <property type="term" value="F:hydrolase activity, acting on acid anhydrides"/>
    <property type="evidence" value="ECO:0007669"/>
    <property type="project" value="InterPro"/>
</dbReference>
<dbReference type="GO" id="GO:0000724">
    <property type="term" value="P:double-strand break repair via homologous recombination"/>
    <property type="evidence" value="ECO:0007669"/>
    <property type="project" value="UniProtKB-UniRule"/>
</dbReference>
<dbReference type="Gene3D" id="3.40.50.300">
    <property type="entry name" value="P-loop containing nucleotide triphosphate hydrolases"/>
    <property type="match status" value="3"/>
</dbReference>
<dbReference type="HAMAP" id="MF_01453">
    <property type="entry name" value="AddB_type2"/>
    <property type="match status" value="1"/>
</dbReference>
<dbReference type="InterPro" id="IPR049035">
    <property type="entry name" value="ADDB_N"/>
</dbReference>
<dbReference type="InterPro" id="IPR014141">
    <property type="entry name" value="DNA_helicase_suRexB"/>
</dbReference>
<dbReference type="InterPro" id="IPR027417">
    <property type="entry name" value="P-loop_NTPase"/>
</dbReference>
<dbReference type="InterPro" id="IPR038726">
    <property type="entry name" value="PDDEXK_AddAB-type"/>
</dbReference>
<dbReference type="PANTHER" id="PTHR30591">
    <property type="entry name" value="RECBCD ENZYME SUBUNIT RECC"/>
    <property type="match status" value="1"/>
</dbReference>
<dbReference type="PANTHER" id="PTHR30591:SF1">
    <property type="entry name" value="RECBCD ENZYME SUBUNIT RECC"/>
    <property type="match status" value="1"/>
</dbReference>
<dbReference type="Pfam" id="PF21445">
    <property type="entry name" value="ADDB_N"/>
    <property type="match status" value="1"/>
</dbReference>
<dbReference type="Pfam" id="PF12705">
    <property type="entry name" value="PDDEXK_1"/>
    <property type="match status" value="1"/>
</dbReference>
<dbReference type="SUPFAM" id="SSF52540">
    <property type="entry name" value="P-loop containing nucleoside triphosphate hydrolases"/>
    <property type="match status" value="1"/>
</dbReference>
<protein>
    <recommendedName>
        <fullName evidence="1">ATP-dependent helicase/deoxyribonuclease subunit B</fullName>
        <ecNumber evidence="1">3.1.-.-</ecNumber>
    </recommendedName>
    <alternativeName>
        <fullName evidence="1">ATP-dependent helicase/nuclease subunit RexB</fullName>
    </alternativeName>
</protein>
<comment type="function">
    <text evidence="1">The heterodimer acts as both an ATP-dependent DNA helicase and an ATP-dependent, dual-direction single-stranded exonuclease. Recognizes the chi site generating a DNA molecule suitable for the initiation of homologous recombination. This subunit has 5' -&gt; 3' nuclease activity but not helicase activity.</text>
</comment>
<comment type="cofactor">
    <cofactor evidence="1">
        <name>Mg(2+)</name>
        <dbReference type="ChEBI" id="CHEBI:18420"/>
    </cofactor>
</comment>
<comment type="subunit">
    <text evidence="1">Heterodimer of AddA and RexB.</text>
</comment>
<comment type="miscellaneous">
    <text evidence="1">Despite having helicase-like domains, this subunit does not have helicase activity.</text>
</comment>
<comment type="similarity">
    <text evidence="1">Belongs to the helicase family. AddB/RexB type 2 subfamily.</text>
</comment>
<name>ADDB_LACPL</name>
<keyword id="KW-0067">ATP-binding</keyword>
<keyword id="KW-0227">DNA damage</keyword>
<keyword id="KW-0234">DNA repair</keyword>
<keyword id="KW-0238">DNA-binding</keyword>
<keyword id="KW-0269">Exonuclease</keyword>
<keyword id="KW-0347">Helicase</keyword>
<keyword id="KW-0378">Hydrolase</keyword>
<keyword id="KW-0540">Nuclease</keyword>
<keyword id="KW-0547">Nucleotide-binding</keyword>
<keyword id="KW-1185">Reference proteome</keyword>
<accession>Q88U40</accession>
<accession>F9URH7</accession>
<proteinExistence type="inferred from homology"/>
<sequence>MSLQFVLGPAKMDHRRTMVAQLVATLMAKPQDQFFYLVPNHIKFDTEVDVLNRLAQAFGQPDLYAQTQVQVFSFTRLAWYLMKNEAAYQVPRLSAAGIDMLLYRILQRHADELRLFGGEISQTGFVTQLAREINELQTANLQPEDVVQLAANAQAGDLQAKLHDLAIVYKDFVAATADKYLKPADILVQLNAYLRRQDLHGTHVYVELAGFAQLPAQEQGIVTTMLEQGADVTISLMLDHKVVDRAPENGTLFYQSGRLYYRLYQYARIRQIPVSQDIYAETPRVAPGLVALDDFWRGQPQAATGYEEPNTNVHLFRTDSRQTELAQVGRMIRAMVAKKHADPADDYHYRDFLIMTRHLDAYQTMLAPTFHELEIPYFVDLQRSMADHPLVELINALFDIDAQQYQYRDVMRVLKTELLMPNINGQPMDRQAYRQAVDLTENFILKSGYHGQRWVQREDWQYFQLTEGDAGVETDQNAEISRQINLIHHFVAETLPPFFKKMRQAPDGKAAVTLLVNFLTSQGVTDQLLAWRDQALDRQDVRAAAEPEQTWQTFCGMLDEYVTILGAEPFEITDFLALLQAGFEGASYSQIPSTLDQVLISESGMVQSQDHKVVFMVGATDLVMPDRIMTNNLLSDVDKENLQLTLSSLDGDHYLNDSAVVQLGDESCLNYLAFLSARRHLFFSAPLKDDQETDLNWSNYVRRIQRQFNLREHTYLGTPDPTNADARPFVGTKRRTISHVIQVYRDVLTTNTDRNRVGAPLQPAPVWVWLRQQLTRDPQFGELARQLMAGLSYRNQPVKLTPASVEALYGHQIYTSISKLEEFYRNQYAYFLKYGLKLRERDVFELSAASTGEFFHAVLDGLIKALRSDQIPLAQASDQQLGQYLETVTRQILDQPQFTILTSSNRMAYLQRQLINTVRQIAFAIRNQSKLSAAEPKQTEILFGNVGKEHGLKALDFQIDATHSVHVRGKIDRLDQIQVADQSYLGIVDYKSSQHKFDFQEAYYGLAMQMLTYLDAVLHNEQALVGSDQAAVKLAGALYMHIQNPTLKPKDIQGGFEAALLKKNKYKGILLDDPQLLEHLDSELQQGNGTSKVYPFARKKDGSYSGGRAASLVTNDQLERLLQHNSQLIIAAAEAIFAGEIQLNPIRLNDKTTALQYSPYLSIMQFDAMLAENAYRDLPPLSAKQVLDLLKTQKGGENHE</sequence>
<evidence type="ECO:0000255" key="1">
    <source>
        <dbReference type="HAMAP-Rule" id="MF_01453"/>
    </source>
</evidence>
<reference key="1">
    <citation type="journal article" date="2003" name="Proc. Natl. Acad. Sci. U.S.A.">
        <title>Complete genome sequence of Lactobacillus plantarum WCFS1.</title>
        <authorList>
            <person name="Kleerebezem M."/>
            <person name="Boekhorst J."/>
            <person name="van Kranenburg R."/>
            <person name="Molenaar D."/>
            <person name="Kuipers O.P."/>
            <person name="Leer R."/>
            <person name="Tarchini R."/>
            <person name="Peters S.A."/>
            <person name="Sandbrink H.M."/>
            <person name="Fiers M.W.E.J."/>
            <person name="Stiekema W."/>
            <person name="Klein Lankhorst R.M."/>
            <person name="Bron P.A."/>
            <person name="Hoffer S.M."/>
            <person name="Nierop Groot M.N."/>
            <person name="Kerkhoven R."/>
            <person name="De Vries M."/>
            <person name="Ursing B."/>
            <person name="De Vos W.M."/>
            <person name="Siezen R.J."/>
        </authorList>
    </citation>
    <scope>NUCLEOTIDE SEQUENCE [LARGE SCALE GENOMIC DNA]</scope>
    <source>
        <strain>ATCC BAA-793 / NCIMB 8826 / WCFS1</strain>
    </source>
</reference>
<reference key="2">
    <citation type="journal article" date="2012" name="J. Bacteriol.">
        <title>Complete resequencing and reannotation of the Lactobacillus plantarum WCFS1 genome.</title>
        <authorList>
            <person name="Siezen R.J."/>
            <person name="Francke C."/>
            <person name="Renckens B."/>
            <person name="Boekhorst J."/>
            <person name="Wels M."/>
            <person name="Kleerebezem M."/>
            <person name="van Hijum S.A."/>
        </authorList>
    </citation>
    <scope>NUCLEOTIDE SEQUENCE [LARGE SCALE GENOMIC DNA]</scope>
    <scope>GENOME REANNOTATION</scope>
    <source>
        <strain>ATCC BAA-793 / NCIMB 8826 / WCFS1</strain>
    </source>
</reference>
<organism>
    <name type="scientific">Lactiplantibacillus plantarum (strain ATCC BAA-793 / NCIMB 8826 / WCFS1)</name>
    <name type="common">Lactobacillus plantarum</name>
    <dbReference type="NCBI Taxonomy" id="220668"/>
    <lineage>
        <taxon>Bacteria</taxon>
        <taxon>Bacillati</taxon>
        <taxon>Bacillota</taxon>
        <taxon>Bacilli</taxon>
        <taxon>Lactobacillales</taxon>
        <taxon>Lactobacillaceae</taxon>
        <taxon>Lactiplantibacillus</taxon>
    </lineage>
</organism>